<proteinExistence type="evidence at protein level"/>
<feature type="chain" id="PRO_0000456902" description="MICOS complex subunit MIC10">
    <location>
        <begin position="1"/>
        <end position="99"/>
    </location>
</feature>
<feature type="transmembrane region" description="Helical" evidence="2">
    <location>
        <begin position="27"/>
        <end position="43"/>
    </location>
</feature>
<feature type="transmembrane region" description="Helical" evidence="2">
    <location>
        <begin position="50"/>
        <end position="66"/>
    </location>
</feature>
<feature type="sequence conflict" description="In Ref. 3; BAD44449." evidence="5" ref="3">
    <original>S</original>
    <variation>F</variation>
    <location>
        <position position="31"/>
    </location>
</feature>
<feature type="sequence conflict" description="In Ref. 3; BAD44449." evidence="5" ref="3">
    <original>S</original>
    <variation>F</variation>
    <location>
        <position position="69"/>
    </location>
</feature>
<feature type="sequence conflict" description="In Ref. 3; BAD44449." evidence="5" ref="3">
    <original>S</original>
    <variation>F</variation>
    <location>
        <position position="94"/>
    </location>
</feature>
<gene>
    <name evidence="4" type="primary">MIC10</name>
    <name evidence="6" type="ordered locus">At1g22520</name>
    <name evidence="7" type="ORF">F12K8.27</name>
</gene>
<dbReference type="EMBL" id="AC006551">
    <property type="status" value="NOT_ANNOTATED_CDS"/>
    <property type="molecule type" value="Genomic_DNA"/>
</dbReference>
<dbReference type="EMBL" id="CP002684">
    <property type="protein sequence ID" value="AEE30251.1"/>
    <property type="molecule type" value="Genomic_DNA"/>
</dbReference>
<dbReference type="EMBL" id="AK176686">
    <property type="protein sequence ID" value="BAD44449.1"/>
    <property type="molecule type" value="mRNA"/>
</dbReference>
<dbReference type="EMBL" id="BT025577">
    <property type="protein sequence ID" value="ABF58995.1"/>
    <property type="molecule type" value="mRNA"/>
</dbReference>
<dbReference type="EMBL" id="AY087767">
    <property type="protein sequence ID" value="AAM65303.1"/>
    <property type="molecule type" value="mRNA"/>
</dbReference>
<dbReference type="RefSeq" id="NP_564173.1">
    <property type="nucleotide sequence ID" value="NM_102101.4"/>
</dbReference>
<dbReference type="FunCoup" id="Q8LAJ9">
    <property type="interactions" value="715"/>
</dbReference>
<dbReference type="SwissPalm" id="Q8LAJ9"/>
<dbReference type="ProteomicsDB" id="179551"/>
<dbReference type="EnsemblPlants" id="AT1G22520.1">
    <property type="protein sequence ID" value="AT1G22520.1"/>
    <property type="gene ID" value="AT1G22520"/>
</dbReference>
<dbReference type="GeneID" id="838858"/>
<dbReference type="Gramene" id="AT1G22520.1">
    <property type="protein sequence ID" value="AT1G22520.1"/>
    <property type="gene ID" value="AT1G22520"/>
</dbReference>
<dbReference type="KEGG" id="ath:AT1G22520"/>
<dbReference type="Araport" id="AT1G22520"/>
<dbReference type="TAIR" id="AT1G22520"/>
<dbReference type="HOGENOM" id="CLU_171428_1_0_1"/>
<dbReference type="OMA" id="AYSECSQ"/>
<dbReference type="OrthoDB" id="1916310at2759"/>
<dbReference type="PRO" id="PR:Q8LAJ9"/>
<dbReference type="Proteomes" id="UP000006548">
    <property type="component" value="Chromosome 1"/>
</dbReference>
<dbReference type="ExpressionAtlas" id="Q8LAJ9">
    <property type="expression patterns" value="baseline and differential"/>
</dbReference>
<dbReference type="GO" id="GO:0098800">
    <property type="term" value="C:inner mitochondrial membrane protein complex"/>
    <property type="evidence" value="ECO:0000314"/>
    <property type="project" value="UniProtKB"/>
</dbReference>
<dbReference type="GO" id="GO:0061617">
    <property type="term" value="C:MICOS complex"/>
    <property type="evidence" value="ECO:0007669"/>
    <property type="project" value="InterPro"/>
</dbReference>
<dbReference type="InterPro" id="IPR007512">
    <property type="entry name" value="Mic10"/>
</dbReference>
<dbReference type="PANTHER" id="PTHR21304">
    <property type="entry name" value="MICOS COMPLEX SUBUNIT MIC10"/>
    <property type="match status" value="1"/>
</dbReference>
<dbReference type="PANTHER" id="PTHR21304:SF13">
    <property type="entry name" value="MICOS COMPLEX SUBUNIT MIC10"/>
    <property type="match status" value="1"/>
</dbReference>
<dbReference type="Pfam" id="PF04418">
    <property type="entry name" value="DUF543"/>
    <property type="match status" value="1"/>
</dbReference>
<sequence length="99" mass="10357">METTKSNSSESDVNAKWDACLDLTARRFVYSSLGGAFAGLLFFRSPVTRWASIAFGAGIGIGSAYTDCSRVFDASSSTSATLLAAPKSTETSVSQAAEE</sequence>
<comment type="function">
    <text evidence="1">Component of the MICOS complex, a large protein complex of the mitochondrial inner membrane that plays crucial roles in the maintenance of crista junctions, inner membrane architecture, and formation of contact sites to the outer membrane.</text>
</comment>
<comment type="subunit">
    <text evidence="1 3">Component of the mitochondrial contact site and cristae organizing system (MICOS) complex (By similarity). The MICOS complex associates with mitochondrial outer membrane proteins (By similarity). Present in a large lipid-enriched complex called mitochondrial transmembrane lipoprotein (MTL) complex made of proteins located in the two mitochondrial membranes, including the TOM complex and the core components of the MICOS complex and containing at least digalactosyldiacylglycerol (DGDG) (PubMed:26898467).</text>
</comment>
<comment type="subcellular location">
    <subcellularLocation>
        <location evidence="1">Mitochondrion inner membrane</location>
        <topology evidence="2">Multi-pass membrane protein</topology>
    </subcellularLocation>
</comment>
<comment type="similarity">
    <text evidence="5">Belongs to the MICOS complex subunit Mic10 family.</text>
</comment>
<name>MIC10_ARATH</name>
<keyword id="KW-0472">Membrane</keyword>
<keyword id="KW-0496">Mitochondrion</keyword>
<keyword id="KW-0999">Mitochondrion inner membrane</keyword>
<keyword id="KW-1185">Reference proteome</keyword>
<keyword id="KW-0812">Transmembrane</keyword>
<keyword id="KW-1133">Transmembrane helix</keyword>
<protein>
    <recommendedName>
        <fullName evidence="4">MICOS complex subunit MIC10</fullName>
        <shortName evidence="4">AtMic10</shortName>
    </recommendedName>
</protein>
<reference key="1">
    <citation type="journal article" date="2000" name="Nature">
        <title>Sequence and analysis of chromosome 1 of the plant Arabidopsis thaliana.</title>
        <authorList>
            <person name="Theologis A."/>
            <person name="Ecker J.R."/>
            <person name="Palm C.J."/>
            <person name="Federspiel N.A."/>
            <person name="Kaul S."/>
            <person name="White O."/>
            <person name="Alonso J."/>
            <person name="Altafi H."/>
            <person name="Araujo R."/>
            <person name="Bowman C.L."/>
            <person name="Brooks S.Y."/>
            <person name="Buehler E."/>
            <person name="Chan A."/>
            <person name="Chao Q."/>
            <person name="Chen H."/>
            <person name="Cheuk R.F."/>
            <person name="Chin C.W."/>
            <person name="Chung M.K."/>
            <person name="Conn L."/>
            <person name="Conway A.B."/>
            <person name="Conway A.R."/>
            <person name="Creasy T.H."/>
            <person name="Dewar K."/>
            <person name="Dunn P."/>
            <person name="Etgu P."/>
            <person name="Feldblyum T.V."/>
            <person name="Feng J.-D."/>
            <person name="Fong B."/>
            <person name="Fujii C.Y."/>
            <person name="Gill J.E."/>
            <person name="Goldsmith A.D."/>
            <person name="Haas B."/>
            <person name="Hansen N.F."/>
            <person name="Hughes B."/>
            <person name="Huizar L."/>
            <person name="Hunter J.L."/>
            <person name="Jenkins J."/>
            <person name="Johnson-Hopson C."/>
            <person name="Khan S."/>
            <person name="Khaykin E."/>
            <person name="Kim C.J."/>
            <person name="Koo H.L."/>
            <person name="Kremenetskaia I."/>
            <person name="Kurtz D.B."/>
            <person name="Kwan A."/>
            <person name="Lam B."/>
            <person name="Langin-Hooper S."/>
            <person name="Lee A."/>
            <person name="Lee J.M."/>
            <person name="Lenz C.A."/>
            <person name="Li J.H."/>
            <person name="Li Y.-P."/>
            <person name="Lin X."/>
            <person name="Liu S.X."/>
            <person name="Liu Z.A."/>
            <person name="Luros J.S."/>
            <person name="Maiti R."/>
            <person name="Marziali A."/>
            <person name="Militscher J."/>
            <person name="Miranda M."/>
            <person name="Nguyen M."/>
            <person name="Nierman W.C."/>
            <person name="Osborne B.I."/>
            <person name="Pai G."/>
            <person name="Peterson J."/>
            <person name="Pham P.K."/>
            <person name="Rizzo M."/>
            <person name="Rooney T."/>
            <person name="Rowley D."/>
            <person name="Sakano H."/>
            <person name="Salzberg S.L."/>
            <person name="Schwartz J.R."/>
            <person name="Shinn P."/>
            <person name="Southwick A.M."/>
            <person name="Sun H."/>
            <person name="Tallon L.J."/>
            <person name="Tambunga G."/>
            <person name="Toriumi M.J."/>
            <person name="Town C.D."/>
            <person name="Utterback T."/>
            <person name="Van Aken S."/>
            <person name="Vaysberg M."/>
            <person name="Vysotskaia V.S."/>
            <person name="Walker M."/>
            <person name="Wu D."/>
            <person name="Yu G."/>
            <person name="Fraser C.M."/>
            <person name="Venter J.C."/>
            <person name="Davis R.W."/>
        </authorList>
    </citation>
    <scope>NUCLEOTIDE SEQUENCE [LARGE SCALE GENOMIC DNA]</scope>
    <source>
        <strain>cv. Columbia</strain>
    </source>
</reference>
<reference key="2">
    <citation type="journal article" date="2017" name="Plant J.">
        <title>Araport11: a complete reannotation of the Arabidopsis thaliana reference genome.</title>
        <authorList>
            <person name="Cheng C.Y."/>
            <person name="Krishnakumar V."/>
            <person name="Chan A.P."/>
            <person name="Thibaud-Nissen F."/>
            <person name="Schobel S."/>
            <person name="Town C.D."/>
        </authorList>
    </citation>
    <scope>GENOME REANNOTATION</scope>
    <source>
        <strain>cv. Columbia</strain>
    </source>
</reference>
<reference key="3">
    <citation type="submission" date="2004-09" db="EMBL/GenBank/DDBJ databases">
        <title>Large-scale analysis of RIKEN Arabidopsis full-length (RAFL) cDNAs.</title>
        <authorList>
            <person name="Totoki Y."/>
            <person name="Seki M."/>
            <person name="Ishida J."/>
            <person name="Nakajima M."/>
            <person name="Enju A."/>
            <person name="Kamiya A."/>
            <person name="Narusaka M."/>
            <person name="Shin-i T."/>
            <person name="Nakagawa M."/>
            <person name="Sakamoto N."/>
            <person name="Oishi K."/>
            <person name="Kohara Y."/>
            <person name="Kobayashi M."/>
            <person name="Toyoda A."/>
            <person name="Sakaki Y."/>
            <person name="Sakurai T."/>
            <person name="Iida K."/>
            <person name="Akiyama K."/>
            <person name="Satou M."/>
            <person name="Toyoda T."/>
            <person name="Konagaya A."/>
            <person name="Carninci P."/>
            <person name="Kawai J."/>
            <person name="Hayashizaki Y."/>
            <person name="Shinozaki K."/>
        </authorList>
    </citation>
    <scope>NUCLEOTIDE SEQUENCE [LARGE SCALE MRNA]</scope>
    <source>
        <strain>cv. Columbia</strain>
    </source>
</reference>
<reference key="4">
    <citation type="submission" date="2006-05" db="EMBL/GenBank/DDBJ databases">
        <title>Arabidopsis ORF clones.</title>
        <authorList>
            <person name="Quinitio C."/>
            <person name="Chen H."/>
            <person name="Kim C.J."/>
            <person name="Shinn P."/>
            <person name="Ecker J.R."/>
        </authorList>
    </citation>
    <scope>NUCLEOTIDE SEQUENCE [LARGE SCALE MRNA]</scope>
    <source>
        <strain>cv. Columbia</strain>
    </source>
</reference>
<reference key="5">
    <citation type="submission" date="2002-03" db="EMBL/GenBank/DDBJ databases">
        <title>Full-length cDNA from Arabidopsis thaliana.</title>
        <authorList>
            <person name="Brover V.V."/>
            <person name="Troukhan M.E."/>
            <person name="Alexandrov N.A."/>
            <person name="Lu Y.-P."/>
            <person name="Flavell R.B."/>
            <person name="Feldmann K.A."/>
        </authorList>
    </citation>
    <scope>NUCLEOTIDE SEQUENCE [LARGE SCALE MRNA]</scope>
</reference>
<reference key="6">
    <citation type="journal article" date="2016" name="Curr. Biol.">
        <title>AtMic60 is involved in plant mitochondria lipid trafficking and is part of a large complex.</title>
        <authorList>
            <person name="Michaud M."/>
            <person name="Gros V."/>
            <person name="Tardif M."/>
            <person name="Brugiere S."/>
            <person name="Ferro M."/>
            <person name="Prinz W.A."/>
            <person name="Toulmay A."/>
            <person name="Mathur J."/>
            <person name="Wozny M."/>
            <person name="Falconet D."/>
            <person name="Marechal E."/>
            <person name="Block M.A."/>
            <person name="Jouhet J."/>
        </authorList>
    </citation>
    <scope>SUBUNIT</scope>
    <scope>IDENTIFICATION BY MASS SPECTROMETRY</scope>
    <source>
        <strain>cv. Columbia</strain>
    </source>
</reference>
<organism>
    <name type="scientific">Arabidopsis thaliana</name>
    <name type="common">Mouse-ear cress</name>
    <dbReference type="NCBI Taxonomy" id="3702"/>
    <lineage>
        <taxon>Eukaryota</taxon>
        <taxon>Viridiplantae</taxon>
        <taxon>Streptophyta</taxon>
        <taxon>Embryophyta</taxon>
        <taxon>Tracheophyta</taxon>
        <taxon>Spermatophyta</taxon>
        <taxon>Magnoliopsida</taxon>
        <taxon>eudicotyledons</taxon>
        <taxon>Gunneridae</taxon>
        <taxon>Pentapetalae</taxon>
        <taxon>rosids</taxon>
        <taxon>malvids</taxon>
        <taxon>Brassicales</taxon>
        <taxon>Brassicaceae</taxon>
        <taxon>Camelineae</taxon>
        <taxon>Arabidopsis</taxon>
    </lineage>
</organism>
<evidence type="ECO:0000250" key="1">
    <source>
        <dbReference type="UniProtKB" id="Q5TGZ0"/>
    </source>
</evidence>
<evidence type="ECO:0000255" key="2"/>
<evidence type="ECO:0000269" key="3">
    <source>
    </source>
</evidence>
<evidence type="ECO:0000303" key="4">
    <source>
    </source>
</evidence>
<evidence type="ECO:0000305" key="5"/>
<evidence type="ECO:0000312" key="6">
    <source>
        <dbReference type="Araport" id="AT1G22520"/>
    </source>
</evidence>
<evidence type="ECO:0000312" key="7">
    <source>
        <dbReference type="EMBL" id="AC006551"/>
    </source>
</evidence>
<accession>Q8LAJ9</accession>
<accession>Q67XY2</accession>